<dbReference type="EC" id="5.6.2.4" evidence="1"/>
<dbReference type="EMBL" id="D90252">
    <property type="protein sequence ID" value="BAA14294.1"/>
    <property type="molecule type" value="Genomic_DNA"/>
</dbReference>
<dbReference type="PIR" id="A40480">
    <property type="entry name" value="W1WLB5"/>
</dbReference>
<dbReference type="SMR" id="P26542"/>
<dbReference type="Proteomes" id="UP000007669">
    <property type="component" value="Genome"/>
</dbReference>
<dbReference type="GO" id="GO:0042025">
    <property type="term" value="C:host cell nucleus"/>
    <property type="evidence" value="ECO:0007669"/>
    <property type="project" value="UniProtKB-SubCell"/>
</dbReference>
<dbReference type="GO" id="GO:0005524">
    <property type="term" value="F:ATP binding"/>
    <property type="evidence" value="ECO:0007669"/>
    <property type="project" value="UniProtKB-UniRule"/>
</dbReference>
<dbReference type="GO" id="GO:0016887">
    <property type="term" value="F:ATP hydrolysis activity"/>
    <property type="evidence" value="ECO:0007669"/>
    <property type="project" value="RHEA"/>
</dbReference>
<dbReference type="GO" id="GO:0003677">
    <property type="term" value="F:DNA binding"/>
    <property type="evidence" value="ECO:0007669"/>
    <property type="project" value="UniProtKB-UniRule"/>
</dbReference>
<dbReference type="GO" id="GO:0003678">
    <property type="term" value="F:DNA helicase activity"/>
    <property type="evidence" value="ECO:0007669"/>
    <property type="project" value="UniProtKB-UniRule"/>
</dbReference>
<dbReference type="GO" id="GO:0006260">
    <property type="term" value="P:DNA replication"/>
    <property type="evidence" value="ECO:0007669"/>
    <property type="project" value="UniProtKB-UniRule"/>
</dbReference>
<dbReference type="Gene3D" id="3.40.1310.10">
    <property type="match status" value="1"/>
</dbReference>
<dbReference type="Gene3D" id="3.40.50.300">
    <property type="entry name" value="P-loop containing nucleotide triphosphate hydrolases"/>
    <property type="match status" value="1"/>
</dbReference>
<dbReference type="Gene3D" id="1.10.10.510">
    <property type="entry name" value="Zinc finger, large T-antigen D1 domain"/>
    <property type="match status" value="1"/>
</dbReference>
<dbReference type="HAMAP" id="MF_04000">
    <property type="entry name" value="PPV_E1"/>
    <property type="match status" value="1"/>
</dbReference>
<dbReference type="InterPro" id="IPR014015">
    <property type="entry name" value="Helicase_SF3_DNA-vir"/>
</dbReference>
<dbReference type="InterPro" id="IPR027417">
    <property type="entry name" value="P-loop_NTPase"/>
</dbReference>
<dbReference type="InterPro" id="IPR001177">
    <property type="entry name" value="PPV_DNA_helicase_E1_C"/>
</dbReference>
<dbReference type="InterPro" id="IPR014000">
    <property type="entry name" value="PPV_DNA_helicase_E1_N"/>
</dbReference>
<dbReference type="InterPro" id="IPR046832">
    <property type="entry name" value="PPV_E1_DBD"/>
</dbReference>
<dbReference type="InterPro" id="IPR046935">
    <property type="entry name" value="PPV_E1_DBD_sf"/>
</dbReference>
<dbReference type="InterPro" id="IPR016393">
    <property type="entry name" value="Rep_E1_papillomaV"/>
</dbReference>
<dbReference type="InterPro" id="IPR037102">
    <property type="entry name" value="Znf_lg_T-Ag_D1_dom_sf"/>
</dbReference>
<dbReference type="Pfam" id="PF00519">
    <property type="entry name" value="PPV_E1_C"/>
    <property type="match status" value="1"/>
</dbReference>
<dbReference type="Pfam" id="PF20450">
    <property type="entry name" value="PPV_E1_DBD"/>
    <property type="match status" value="1"/>
</dbReference>
<dbReference type="Pfam" id="PF00524">
    <property type="entry name" value="PPV_E1_N"/>
    <property type="match status" value="1"/>
</dbReference>
<dbReference type="PIRSF" id="PIRSF003383">
    <property type="entry name" value="Rep_E1_papillomaV"/>
    <property type="match status" value="1"/>
</dbReference>
<dbReference type="SUPFAM" id="SSF55464">
    <property type="entry name" value="Origin of replication-binding domain, RBD-like"/>
    <property type="match status" value="1"/>
</dbReference>
<dbReference type="SUPFAM" id="SSF52540">
    <property type="entry name" value="P-loop containing nucleoside triphosphate hydrolases"/>
    <property type="match status" value="1"/>
</dbReference>
<dbReference type="PROSITE" id="PS51206">
    <property type="entry name" value="SF3_HELICASE_1"/>
    <property type="match status" value="1"/>
</dbReference>
<organism>
    <name type="scientific">Human papillomavirus type 5b</name>
    <dbReference type="NCBI Taxonomy" id="10599"/>
    <lineage>
        <taxon>Viruses</taxon>
        <taxon>Monodnaviria</taxon>
        <taxon>Shotokuvirae</taxon>
        <taxon>Cossaviricota</taxon>
        <taxon>Papovaviricetes</taxon>
        <taxon>Zurhausenvirales</taxon>
        <taxon>Papillomaviridae</taxon>
        <taxon>Firstpapillomavirinae</taxon>
        <taxon>Betapapillomavirus</taxon>
        <taxon>Betapapillomavirus 1</taxon>
    </lineage>
</organism>
<gene>
    <name evidence="1" type="primary">E1</name>
</gene>
<feature type="chain" id="PRO_0000133102" description="Replication protein E1">
    <location>
        <begin position="1"/>
        <end position="606"/>
    </location>
</feature>
<feature type="domain" description="SF3 helicase" evidence="1">
    <location>
        <begin position="408"/>
        <end position="558"/>
    </location>
</feature>
<feature type="region of interest" description="DNA-binding region" evidence="1">
    <location>
        <begin position="146"/>
        <end position="309"/>
    </location>
</feature>
<feature type="region of interest" description="Disordered" evidence="2">
    <location>
        <begin position="581"/>
        <end position="606"/>
    </location>
</feature>
<feature type="short sequence motif" description="Nuclear localization signal" evidence="1">
    <location>
        <begin position="78"/>
        <end position="80"/>
    </location>
</feature>
<feature type="short sequence motif" description="Nuclear export signal" evidence="1">
    <location>
        <begin position="90"/>
        <end position="99"/>
    </location>
</feature>
<feature type="compositionally biased region" description="Polar residues" evidence="2">
    <location>
        <begin position="593"/>
        <end position="606"/>
    </location>
</feature>
<feature type="binding site" evidence="1">
    <location>
        <begin position="434"/>
        <end position="441"/>
    </location>
    <ligand>
        <name>ATP</name>
        <dbReference type="ChEBI" id="CHEBI:30616"/>
    </ligand>
</feature>
<feature type="modified residue" description="Phosphoserine; by host" evidence="1">
    <location>
        <position position="83"/>
    </location>
</feature>
<feature type="modified residue" description="Phosphoserine; by host" evidence="1">
    <location>
        <position position="91"/>
    </location>
</feature>
<feature type="cross-link" description="Glycyl lysine isopeptide (Lys-Gly) (interchain with G-Cter in SUMO)" evidence="1">
    <location>
        <position position="515"/>
    </location>
</feature>
<evidence type="ECO:0000255" key="1">
    <source>
        <dbReference type="HAMAP-Rule" id="MF_04000"/>
    </source>
</evidence>
<evidence type="ECO:0000256" key="2">
    <source>
        <dbReference type="SAM" id="MobiDB-lite"/>
    </source>
</evidence>
<proteinExistence type="inferred from homology"/>
<name>VE1_HPV5B</name>
<comment type="function">
    <text evidence="1">ATP-dependent DNA 3'-5' helicase required for initiation of viral DNA replication. It forms a complex with the viral E2 protein. The E1-E2 complex binds to the replication origin which contains binding sites for both proteins. During the initial step, a dimer of E1 interacts with a dimer of protein E2 leading to a complex that binds the viral origin of replication with high specificity. Then, a second dimer of E1 displaces the E2 dimer in an ATP-dependent manner to form the E1 tetramer. Following this, two E1 monomers are added to each half of the site, which results in the formation of two E1 trimers on the viral ori. Subsequently, two hexamers will be created. The double hexamer acts as a bi-directional helicase machinery and unwinds the viral DNA and then recruits the host DNA polymerase to start replication.</text>
</comment>
<comment type="catalytic activity">
    <reaction evidence="1">
        <text>Couples ATP hydrolysis with the unwinding of duplex DNA by translocating in the 3'-5' direction.</text>
        <dbReference type="EC" id="5.6.2.4"/>
    </reaction>
</comment>
<comment type="catalytic activity">
    <reaction evidence="1">
        <text>ATP + H2O = ADP + phosphate + H(+)</text>
        <dbReference type="Rhea" id="RHEA:13065"/>
        <dbReference type="ChEBI" id="CHEBI:15377"/>
        <dbReference type="ChEBI" id="CHEBI:15378"/>
        <dbReference type="ChEBI" id="CHEBI:30616"/>
        <dbReference type="ChEBI" id="CHEBI:43474"/>
        <dbReference type="ChEBI" id="CHEBI:456216"/>
        <dbReference type="EC" id="5.6.2.4"/>
    </reaction>
</comment>
<comment type="subunit">
    <text evidence="1">Can form hexamers. Interacts with E2 protein; this interaction increases E1 DNA binding specificity. Interacts with host DNA polymerase subunit POLA2. Interacts with host single stranded DNA-binding protein RPA1. Interacts with host TOP1; this interaction stimulates the enzymatic activity of TOP1.</text>
</comment>
<comment type="subcellular location">
    <subcellularLocation>
        <location evidence="1">Host nucleus</location>
    </subcellularLocation>
</comment>
<comment type="PTM">
    <text evidence="1">Phosphorylated.</text>
</comment>
<comment type="PTM">
    <text evidence="1">Sumoylated.</text>
</comment>
<comment type="similarity">
    <text evidence="1">Belongs to the papillomaviridae E1 protein family.</text>
</comment>
<accession>P26542</accession>
<protein>
    <recommendedName>
        <fullName evidence="1">Replication protein E1</fullName>
        <ecNumber evidence="1">5.6.2.4</ecNumber>
    </recommendedName>
    <alternativeName>
        <fullName evidence="1">ATP-dependent helicase E1</fullName>
    </alternativeName>
    <alternativeName>
        <fullName evidence="1">DNA 3'-5' helicase E1</fullName>
    </alternativeName>
</protein>
<keyword id="KW-0067">ATP-binding</keyword>
<keyword id="KW-0235">DNA replication</keyword>
<keyword id="KW-0238">DNA-binding</keyword>
<keyword id="KW-0244">Early protein</keyword>
<keyword id="KW-0347">Helicase</keyword>
<keyword id="KW-1048">Host nucleus</keyword>
<keyword id="KW-0378">Hydrolase</keyword>
<keyword id="KW-0413">Isomerase</keyword>
<keyword id="KW-1017">Isopeptide bond</keyword>
<keyword id="KW-0547">Nucleotide-binding</keyword>
<keyword id="KW-0597">Phosphoprotein</keyword>
<keyword id="KW-0832">Ubl conjugation</keyword>
<reference key="1">
    <citation type="journal article" date="1991" name="Virology">
        <title>A subtype of human papillomavirus 5 (HPV-5b) and its subgenomic segment amplified in a carcinoma: nucleotide sequences and genomic organizations.</title>
        <authorList>
            <person name="Yabe Y."/>
            <person name="Sakai A."/>
            <person name="Hitsumoto T."/>
            <person name="Kato H."/>
            <person name="Ogura H."/>
        </authorList>
    </citation>
    <scope>NUCLEOTIDE SEQUENCE [GENOMIC DNA]</scope>
</reference>
<organismHost>
    <name type="scientific">Homo sapiens</name>
    <name type="common">Human</name>
    <dbReference type="NCBI Taxonomy" id="9606"/>
</organismHost>
<sequence length="606" mass="69127">MTDPNPKGSTSKEGFGDWCLLEADCSDVENDLGQLFERDTDSDISDLLDDTELEQGNSLELFHQQECEQSEEQLQKLKRKYLSPKAIAQLSPRLESISLSPQQKSKRRLFAEQDSGLELTLNNEAEDVTPEVEVPAIDSRPDDEGGSGDVDIHYTSLLRSSNKKATLMAKFKESFGVGFNELTRQFKSHKTCCKDWVVSVYAVHDDLFESSKQLLQQHCDYIWVRGIGAMSLYLLCFKAGKNRGTVHKLITSMLNVHEQQILSEPPKLRNTAAALFWYKGCMGSGAFSHGPYPDWIAQQTILGHKSAEASTFDFSAMVQWAFDNHLLDEPDIAYQYARLAPEDANAVAWLAHNNQAKFVRECAAMVRFYKKGQMRDMSISEWIYTKINEVEGEGHWSDIVKFIRYQNINFIVFLTALKEFLHSVPKKNCILIYGPPNSGKSSFAMSLIRVLKGRVLSFVNSKSQFWLQPLSECKIALLDDVTDPCWVYMDTYLRNGLDGHYVSLDCKYRAPTQMKFPPLLLTSNINVHGEANYRYLHSRIRGFEFPNPFPMKADNTPQFELTDQSWKSFFTRLWTQLDLSDQEEEGEDGESQRAFQCSARSANEHL</sequence>